<feature type="chain" id="PRO_0000363288" description="Probable protein phosphatase 2C 41">
    <location>
        <begin position="1"/>
        <end position="284"/>
    </location>
</feature>
<feature type="domain" description="PPM-type phosphatase" evidence="2">
    <location>
        <begin position="35"/>
        <end position="282"/>
    </location>
</feature>
<feature type="binding site" evidence="1">
    <location>
        <position position="72"/>
    </location>
    <ligand>
        <name>Mn(2+)</name>
        <dbReference type="ChEBI" id="CHEBI:29035"/>
        <label>1</label>
    </ligand>
</feature>
<feature type="binding site" evidence="1">
    <location>
        <position position="72"/>
    </location>
    <ligand>
        <name>Mn(2+)</name>
        <dbReference type="ChEBI" id="CHEBI:29035"/>
        <label>2</label>
    </ligand>
</feature>
<feature type="binding site" evidence="1">
    <location>
        <position position="73"/>
    </location>
    <ligand>
        <name>Mn(2+)</name>
        <dbReference type="ChEBI" id="CHEBI:29035"/>
        <label>1</label>
    </ligand>
</feature>
<feature type="binding site" evidence="1">
    <location>
        <position position="234"/>
    </location>
    <ligand>
        <name>Mn(2+)</name>
        <dbReference type="ChEBI" id="CHEBI:29035"/>
        <label>2</label>
    </ligand>
</feature>
<feature type="binding site" evidence="1">
    <location>
        <position position="273"/>
    </location>
    <ligand>
        <name>Mn(2+)</name>
        <dbReference type="ChEBI" id="CHEBI:29035"/>
        <label>2</label>
    </ligand>
</feature>
<feature type="sequence conflict" description="In Ref. 6; BAH01419." evidence="3" ref="6">
    <original>L</original>
    <variation>F</variation>
    <location>
        <position position="65"/>
    </location>
</feature>
<keyword id="KW-0378">Hydrolase</keyword>
<keyword id="KW-0460">Magnesium</keyword>
<keyword id="KW-0464">Manganese</keyword>
<keyword id="KW-0479">Metal-binding</keyword>
<keyword id="KW-0904">Protein phosphatase</keyword>
<keyword id="KW-1185">Reference proteome</keyword>
<dbReference type="EC" id="3.1.3.16"/>
<dbReference type="EMBL" id="AL606615">
    <property type="protein sequence ID" value="CAE02979.1"/>
    <property type="status" value="ALT_SEQ"/>
    <property type="molecule type" value="Genomic_DNA"/>
</dbReference>
<dbReference type="EMBL" id="AL606615">
    <property type="protein sequence ID" value="CAE02980.1"/>
    <property type="status" value="ALT_SEQ"/>
    <property type="molecule type" value="Genomic_DNA"/>
</dbReference>
<dbReference type="EMBL" id="AP008210">
    <property type="protein sequence ID" value="BAF14862.2"/>
    <property type="status" value="ALT_SEQ"/>
    <property type="molecule type" value="Genomic_DNA"/>
</dbReference>
<dbReference type="EMBL" id="AP014960">
    <property type="protein sequence ID" value="BAS89468.1"/>
    <property type="molecule type" value="Genomic_DNA"/>
</dbReference>
<dbReference type="EMBL" id="CM000141">
    <property type="protein sequence ID" value="EEE61099.1"/>
    <property type="molecule type" value="Genomic_DNA"/>
</dbReference>
<dbReference type="EMBL" id="AK243041">
    <property type="protein sequence ID" value="BAH01419.1"/>
    <property type="status" value="ALT_INIT"/>
    <property type="molecule type" value="mRNA"/>
</dbReference>
<dbReference type="RefSeq" id="XP_015636555.1">
    <property type="nucleotide sequence ID" value="XM_015781069.1"/>
</dbReference>
<dbReference type="RefSeq" id="XP_015636556.1">
    <property type="nucleotide sequence ID" value="XM_015781070.1"/>
</dbReference>
<dbReference type="SMR" id="Q7XQU7"/>
<dbReference type="FunCoup" id="Q7XQU7">
    <property type="interactions" value="80"/>
</dbReference>
<dbReference type="STRING" id="39947.Q7XQU7"/>
<dbReference type="PaxDb" id="39947-Q7XQU7"/>
<dbReference type="EnsemblPlants" id="Os04t0452000-01">
    <property type="protein sequence ID" value="Os04t0452000-01"/>
    <property type="gene ID" value="Os04g0452000"/>
</dbReference>
<dbReference type="Gramene" id="Os04t0452000-01">
    <property type="protein sequence ID" value="Os04t0452000-01"/>
    <property type="gene ID" value="Os04g0452000"/>
</dbReference>
<dbReference type="KEGG" id="dosa:Os04g0451900"/>
<dbReference type="eggNOG" id="KOG0698">
    <property type="taxonomic scope" value="Eukaryota"/>
</dbReference>
<dbReference type="HOGENOM" id="CLU_013173_0_1_1"/>
<dbReference type="InParanoid" id="Q7XQU7"/>
<dbReference type="OMA" id="WTHPDRS"/>
<dbReference type="OrthoDB" id="10264738at2759"/>
<dbReference type="Proteomes" id="UP000000763">
    <property type="component" value="Chromosome 4"/>
</dbReference>
<dbReference type="Proteomes" id="UP000007752">
    <property type="component" value="Chromosome 4"/>
</dbReference>
<dbReference type="Proteomes" id="UP000059680">
    <property type="component" value="Chromosome 4"/>
</dbReference>
<dbReference type="GO" id="GO:0046872">
    <property type="term" value="F:metal ion binding"/>
    <property type="evidence" value="ECO:0007669"/>
    <property type="project" value="UniProtKB-KW"/>
</dbReference>
<dbReference type="GO" id="GO:0004722">
    <property type="term" value="F:protein serine/threonine phosphatase activity"/>
    <property type="evidence" value="ECO:0007669"/>
    <property type="project" value="UniProtKB-EC"/>
</dbReference>
<dbReference type="GO" id="GO:0007165">
    <property type="term" value="P:signal transduction"/>
    <property type="evidence" value="ECO:0000318"/>
    <property type="project" value="GO_Central"/>
</dbReference>
<dbReference type="CDD" id="cd00143">
    <property type="entry name" value="PP2Cc"/>
    <property type="match status" value="1"/>
</dbReference>
<dbReference type="FunFam" id="3.60.40.10:FF:000010">
    <property type="entry name" value="Probable protein phosphatase 2C 39"/>
    <property type="match status" value="1"/>
</dbReference>
<dbReference type="Gene3D" id="3.60.40.10">
    <property type="entry name" value="PPM-type phosphatase domain"/>
    <property type="match status" value="1"/>
</dbReference>
<dbReference type="InterPro" id="IPR015655">
    <property type="entry name" value="PP2C"/>
</dbReference>
<dbReference type="InterPro" id="IPR036457">
    <property type="entry name" value="PPM-type-like_dom_sf"/>
</dbReference>
<dbReference type="InterPro" id="IPR001932">
    <property type="entry name" value="PPM-type_phosphatase-like_dom"/>
</dbReference>
<dbReference type="PANTHER" id="PTHR47992">
    <property type="entry name" value="PROTEIN PHOSPHATASE"/>
    <property type="match status" value="1"/>
</dbReference>
<dbReference type="Pfam" id="PF00481">
    <property type="entry name" value="PP2C"/>
    <property type="match status" value="1"/>
</dbReference>
<dbReference type="SMART" id="SM00331">
    <property type="entry name" value="PP2C_SIG"/>
    <property type="match status" value="1"/>
</dbReference>
<dbReference type="SMART" id="SM00332">
    <property type="entry name" value="PP2Cc"/>
    <property type="match status" value="1"/>
</dbReference>
<dbReference type="SUPFAM" id="SSF81606">
    <property type="entry name" value="PP2C-like"/>
    <property type="match status" value="1"/>
</dbReference>
<dbReference type="PROSITE" id="PS51746">
    <property type="entry name" value="PPM_2"/>
    <property type="match status" value="1"/>
</dbReference>
<protein>
    <recommendedName>
        <fullName>Probable protein phosphatase 2C 41</fullName>
        <shortName>OsPP2C41</shortName>
        <ecNumber>3.1.3.16</ecNumber>
    </recommendedName>
</protein>
<comment type="catalytic activity">
    <reaction>
        <text>O-phospho-L-seryl-[protein] + H2O = L-seryl-[protein] + phosphate</text>
        <dbReference type="Rhea" id="RHEA:20629"/>
        <dbReference type="Rhea" id="RHEA-COMP:9863"/>
        <dbReference type="Rhea" id="RHEA-COMP:11604"/>
        <dbReference type="ChEBI" id="CHEBI:15377"/>
        <dbReference type="ChEBI" id="CHEBI:29999"/>
        <dbReference type="ChEBI" id="CHEBI:43474"/>
        <dbReference type="ChEBI" id="CHEBI:83421"/>
        <dbReference type="EC" id="3.1.3.16"/>
    </reaction>
</comment>
<comment type="catalytic activity">
    <reaction>
        <text>O-phospho-L-threonyl-[protein] + H2O = L-threonyl-[protein] + phosphate</text>
        <dbReference type="Rhea" id="RHEA:47004"/>
        <dbReference type="Rhea" id="RHEA-COMP:11060"/>
        <dbReference type="Rhea" id="RHEA-COMP:11605"/>
        <dbReference type="ChEBI" id="CHEBI:15377"/>
        <dbReference type="ChEBI" id="CHEBI:30013"/>
        <dbReference type="ChEBI" id="CHEBI:43474"/>
        <dbReference type="ChEBI" id="CHEBI:61977"/>
        <dbReference type="EC" id="3.1.3.16"/>
    </reaction>
</comment>
<comment type="cofactor">
    <cofactor evidence="1">
        <name>Mg(2+)</name>
        <dbReference type="ChEBI" id="CHEBI:18420"/>
    </cofactor>
    <cofactor evidence="1">
        <name>Mn(2+)</name>
        <dbReference type="ChEBI" id="CHEBI:29035"/>
    </cofactor>
    <text evidence="1">Binds 2 magnesium or manganese ions per subunit.</text>
</comment>
<comment type="similarity">
    <text evidence="3">Belongs to the PP2C family.</text>
</comment>
<comment type="sequence caution" evidence="3">
    <conflict type="erroneous gene model prediction">
        <sequence resource="EMBL-CDS" id="BAF14862"/>
    </conflict>
</comment>
<comment type="sequence caution" evidence="3">
    <conflict type="erroneous initiation">
        <sequence resource="EMBL-CDS" id="BAH01419"/>
    </conflict>
    <text>Truncated N-terminus.</text>
</comment>
<comment type="sequence caution" evidence="3">
    <conflict type="erroneous gene model prediction">
        <sequence resource="EMBL-CDS" id="CAE02979"/>
    </conflict>
    <text>Was originally thought to correspond to two different genes Os04g0451900 and Os04g0452000.</text>
</comment>
<comment type="sequence caution" evidence="3">
    <conflict type="erroneous gene model prediction">
        <sequence resource="EMBL-CDS" id="CAE02980"/>
    </conflict>
    <text>Was originally thought to correspond to two different genes Os04g0451900 and Os04g0452000.</text>
</comment>
<sequence>MSRFCCFGAGCSEFSGHASTSSGKGKGIQGQVKVSYGFYLVRGMTNHPMEDYHVAELAEEKGNELGLFAIFDGHLGDTVPAYLQKNLFANILNEEEFLTQPDRAIIKAYEKTDQAILSHTPDLGQGGSTAVTAILLNGRKLWVANVGDSRAVLLKGGRPIQMSTDHDPNVERSAIENRGGFVSNMPGDVPRVCGQLAVSRAFGDRNLKSLLKSEPDIKVEDIDYTAELLVLASDGLWKVMNNQEVVDVAKRFKDPQAAAKQLTAEALKRDSKDDISCVVVRFRM</sequence>
<reference key="1">
    <citation type="journal article" date="2002" name="Nature">
        <title>Sequence and analysis of rice chromosome 4.</title>
        <authorList>
            <person name="Feng Q."/>
            <person name="Zhang Y."/>
            <person name="Hao P."/>
            <person name="Wang S."/>
            <person name="Fu G."/>
            <person name="Huang Y."/>
            <person name="Li Y."/>
            <person name="Zhu J."/>
            <person name="Liu Y."/>
            <person name="Hu X."/>
            <person name="Jia P."/>
            <person name="Zhang Y."/>
            <person name="Zhao Q."/>
            <person name="Ying K."/>
            <person name="Yu S."/>
            <person name="Tang Y."/>
            <person name="Weng Q."/>
            <person name="Zhang L."/>
            <person name="Lu Y."/>
            <person name="Mu J."/>
            <person name="Lu Y."/>
            <person name="Zhang L.S."/>
            <person name="Yu Z."/>
            <person name="Fan D."/>
            <person name="Liu X."/>
            <person name="Lu T."/>
            <person name="Li C."/>
            <person name="Wu Y."/>
            <person name="Sun T."/>
            <person name="Lei H."/>
            <person name="Li T."/>
            <person name="Hu H."/>
            <person name="Guan J."/>
            <person name="Wu M."/>
            <person name="Zhang R."/>
            <person name="Zhou B."/>
            <person name="Chen Z."/>
            <person name="Chen L."/>
            <person name="Jin Z."/>
            <person name="Wang R."/>
            <person name="Yin H."/>
            <person name="Cai Z."/>
            <person name="Ren S."/>
            <person name="Lv G."/>
            <person name="Gu W."/>
            <person name="Zhu G."/>
            <person name="Tu Y."/>
            <person name="Jia J."/>
            <person name="Zhang Y."/>
            <person name="Chen J."/>
            <person name="Kang H."/>
            <person name="Chen X."/>
            <person name="Shao C."/>
            <person name="Sun Y."/>
            <person name="Hu Q."/>
            <person name="Zhang X."/>
            <person name="Zhang W."/>
            <person name="Wang L."/>
            <person name="Ding C."/>
            <person name="Sheng H."/>
            <person name="Gu J."/>
            <person name="Chen S."/>
            <person name="Ni L."/>
            <person name="Zhu F."/>
            <person name="Chen W."/>
            <person name="Lan L."/>
            <person name="Lai Y."/>
            <person name="Cheng Z."/>
            <person name="Gu M."/>
            <person name="Jiang J."/>
            <person name="Li J."/>
            <person name="Hong G."/>
            <person name="Xue Y."/>
            <person name="Han B."/>
        </authorList>
    </citation>
    <scope>NUCLEOTIDE SEQUENCE [LARGE SCALE GENOMIC DNA]</scope>
    <source>
        <strain>cv. Nipponbare</strain>
    </source>
</reference>
<reference key="2">
    <citation type="journal article" date="2005" name="Nature">
        <title>The map-based sequence of the rice genome.</title>
        <authorList>
            <consortium name="International rice genome sequencing project (IRGSP)"/>
        </authorList>
    </citation>
    <scope>NUCLEOTIDE SEQUENCE [LARGE SCALE GENOMIC DNA]</scope>
    <source>
        <strain>cv. Nipponbare</strain>
    </source>
</reference>
<reference key="3">
    <citation type="journal article" date="2008" name="Nucleic Acids Res.">
        <title>The rice annotation project database (RAP-DB): 2008 update.</title>
        <authorList>
            <consortium name="The rice annotation project (RAP)"/>
        </authorList>
    </citation>
    <scope>GENOME REANNOTATION</scope>
    <source>
        <strain>cv. Nipponbare</strain>
    </source>
</reference>
<reference key="4">
    <citation type="journal article" date="2013" name="Rice">
        <title>Improvement of the Oryza sativa Nipponbare reference genome using next generation sequence and optical map data.</title>
        <authorList>
            <person name="Kawahara Y."/>
            <person name="de la Bastide M."/>
            <person name="Hamilton J.P."/>
            <person name="Kanamori H."/>
            <person name="McCombie W.R."/>
            <person name="Ouyang S."/>
            <person name="Schwartz D.C."/>
            <person name="Tanaka T."/>
            <person name="Wu J."/>
            <person name="Zhou S."/>
            <person name="Childs K.L."/>
            <person name="Davidson R.M."/>
            <person name="Lin H."/>
            <person name="Quesada-Ocampo L."/>
            <person name="Vaillancourt B."/>
            <person name="Sakai H."/>
            <person name="Lee S.S."/>
            <person name="Kim J."/>
            <person name="Numa H."/>
            <person name="Itoh T."/>
            <person name="Buell C.R."/>
            <person name="Matsumoto T."/>
        </authorList>
    </citation>
    <scope>GENOME REANNOTATION</scope>
    <source>
        <strain>cv. Nipponbare</strain>
    </source>
</reference>
<reference key="5">
    <citation type="journal article" date="2005" name="PLoS Biol.">
        <title>The genomes of Oryza sativa: a history of duplications.</title>
        <authorList>
            <person name="Yu J."/>
            <person name="Wang J."/>
            <person name="Lin W."/>
            <person name="Li S."/>
            <person name="Li H."/>
            <person name="Zhou J."/>
            <person name="Ni P."/>
            <person name="Dong W."/>
            <person name="Hu S."/>
            <person name="Zeng C."/>
            <person name="Zhang J."/>
            <person name="Zhang Y."/>
            <person name="Li R."/>
            <person name="Xu Z."/>
            <person name="Li S."/>
            <person name="Li X."/>
            <person name="Zheng H."/>
            <person name="Cong L."/>
            <person name="Lin L."/>
            <person name="Yin J."/>
            <person name="Geng J."/>
            <person name="Li G."/>
            <person name="Shi J."/>
            <person name="Liu J."/>
            <person name="Lv H."/>
            <person name="Li J."/>
            <person name="Wang J."/>
            <person name="Deng Y."/>
            <person name="Ran L."/>
            <person name="Shi X."/>
            <person name="Wang X."/>
            <person name="Wu Q."/>
            <person name="Li C."/>
            <person name="Ren X."/>
            <person name="Wang J."/>
            <person name="Wang X."/>
            <person name="Li D."/>
            <person name="Liu D."/>
            <person name="Zhang X."/>
            <person name="Ji Z."/>
            <person name="Zhao W."/>
            <person name="Sun Y."/>
            <person name="Zhang Z."/>
            <person name="Bao J."/>
            <person name="Han Y."/>
            <person name="Dong L."/>
            <person name="Ji J."/>
            <person name="Chen P."/>
            <person name="Wu S."/>
            <person name="Liu J."/>
            <person name="Xiao Y."/>
            <person name="Bu D."/>
            <person name="Tan J."/>
            <person name="Yang L."/>
            <person name="Ye C."/>
            <person name="Zhang J."/>
            <person name="Xu J."/>
            <person name="Zhou Y."/>
            <person name="Yu Y."/>
            <person name="Zhang B."/>
            <person name="Zhuang S."/>
            <person name="Wei H."/>
            <person name="Liu B."/>
            <person name="Lei M."/>
            <person name="Yu H."/>
            <person name="Li Y."/>
            <person name="Xu H."/>
            <person name="Wei S."/>
            <person name="He X."/>
            <person name="Fang L."/>
            <person name="Zhang Z."/>
            <person name="Zhang Y."/>
            <person name="Huang X."/>
            <person name="Su Z."/>
            <person name="Tong W."/>
            <person name="Li J."/>
            <person name="Tong Z."/>
            <person name="Li S."/>
            <person name="Ye J."/>
            <person name="Wang L."/>
            <person name="Fang L."/>
            <person name="Lei T."/>
            <person name="Chen C.-S."/>
            <person name="Chen H.-C."/>
            <person name="Xu Z."/>
            <person name="Li H."/>
            <person name="Huang H."/>
            <person name="Zhang F."/>
            <person name="Xu H."/>
            <person name="Li N."/>
            <person name="Zhao C."/>
            <person name="Li S."/>
            <person name="Dong L."/>
            <person name="Huang Y."/>
            <person name="Li L."/>
            <person name="Xi Y."/>
            <person name="Qi Q."/>
            <person name="Li W."/>
            <person name="Zhang B."/>
            <person name="Hu W."/>
            <person name="Zhang Y."/>
            <person name="Tian X."/>
            <person name="Jiao Y."/>
            <person name="Liang X."/>
            <person name="Jin J."/>
            <person name="Gao L."/>
            <person name="Zheng W."/>
            <person name="Hao B."/>
            <person name="Liu S.-M."/>
            <person name="Wang W."/>
            <person name="Yuan L."/>
            <person name="Cao M."/>
            <person name="McDermott J."/>
            <person name="Samudrala R."/>
            <person name="Wang J."/>
            <person name="Wong G.K.-S."/>
            <person name="Yang H."/>
        </authorList>
    </citation>
    <scope>NUCLEOTIDE SEQUENCE [LARGE SCALE GENOMIC DNA]</scope>
    <source>
        <strain>cv. Nipponbare</strain>
    </source>
</reference>
<reference key="6">
    <citation type="submission" date="2006-10" db="EMBL/GenBank/DDBJ databases">
        <title>Oryza sativa full length cDNA.</title>
        <authorList>
            <consortium name="The rice full-length cDNA consortium"/>
        </authorList>
    </citation>
    <scope>NUCLEOTIDE SEQUENCE [LARGE SCALE MRNA]</scope>
    <source>
        <strain>cv. Nipponbare</strain>
    </source>
</reference>
<reference key="7">
    <citation type="journal article" date="2008" name="BMC Genomics">
        <title>Genome-wide and expression analysis of protein phosphatase 2C in rice and Arabidopsis.</title>
        <authorList>
            <person name="Xue T."/>
            <person name="Wang D."/>
            <person name="Zhang S."/>
            <person name="Ehlting J."/>
            <person name="Ni F."/>
            <person name="Jacab S."/>
            <person name="Zheng C."/>
            <person name="Zhong Y."/>
        </authorList>
    </citation>
    <scope>GENE FAMILY</scope>
    <scope>NOMENCLATURE</scope>
</reference>
<name>P2C41_ORYSJ</name>
<evidence type="ECO:0000250" key="1"/>
<evidence type="ECO:0000255" key="2">
    <source>
        <dbReference type="PROSITE-ProRule" id="PRU01082"/>
    </source>
</evidence>
<evidence type="ECO:0000305" key="3"/>
<organism>
    <name type="scientific">Oryza sativa subsp. japonica</name>
    <name type="common">Rice</name>
    <dbReference type="NCBI Taxonomy" id="39947"/>
    <lineage>
        <taxon>Eukaryota</taxon>
        <taxon>Viridiplantae</taxon>
        <taxon>Streptophyta</taxon>
        <taxon>Embryophyta</taxon>
        <taxon>Tracheophyta</taxon>
        <taxon>Spermatophyta</taxon>
        <taxon>Magnoliopsida</taxon>
        <taxon>Liliopsida</taxon>
        <taxon>Poales</taxon>
        <taxon>Poaceae</taxon>
        <taxon>BOP clade</taxon>
        <taxon>Oryzoideae</taxon>
        <taxon>Oryzeae</taxon>
        <taxon>Oryzinae</taxon>
        <taxon>Oryza</taxon>
        <taxon>Oryza sativa</taxon>
    </lineage>
</organism>
<accession>Q7XQU7</accession>
<accession>A0A0P0WB16</accession>
<accession>B7F9X1</accession>
<accession>B9FFG5</accession>
<accession>Q7XQU8</accession>
<proteinExistence type="evidence at transcript level"/>
<gene>
    <name type="ordered locus">Os04g0452000</name>
    <name type="ordered locus">Os04g0451900</name>
    <name type="ordered locus">LOC_Os04g37904</name>
    <name type="ORF">OsJ_014406</name>
    <name type="ORF">OSJNBa0086B14.22/OSJNBa0086B14.21</name>
</gene>